<sequence length="255" mass="28491">MFDFWVGPFYVGFFGVTTCLFASLGIALILLGTALGPTWNPLRINIAPPDLSYGLGFAPLMKGGLWQLITICAIGRFCCWALRQVEIARKLGMGLHIPFAFSFAIFAYLALVVIRPLLLGAWGHGXPYGILSHLDWVSNIGYQFLHFHYNPAHMIGITFFFTNCMAFGMHGSIILSVLNPGKGEKVKGSEHENTFFRDVVGYSIGTLGIHRLGVFLAISAAFWSAVCIILSGPFWTRGWPEWWNWWLQFPYSFVG</sequence>
<evidence type="ECO:0000250" key="1"/>
<evidence type="ECO:0000255" key="2"/>
<evidence type="ECO:0000305" key="3"/>
<feature type="chain" id="PRO_0000090406" description="Reaction center protein L chain">
    <location>
        <begin position="1" status="less than"/>
        <end position="255"/>
    </location>
</feature>
<feature type="transmembrane region" description="Helical" evidence="2">
    <location>
        <begin position="12"/>
        <end position="35"/>
    </location>
</feature>
<feature type="transmembrane region" description="Helical" evidence="2">
    <location>
        <begin position="64"/>
        <end position="92"/>
    </location>
</feature>
<feature type="transmembrane region" description="Helical" evidence="2">
    <location>
        <begin position="95"/>
        <end position="120"/>
    </location>
</feature>
<feature type="transmembrane region" description="Helical" evidence="2">
    <location>
        <begin position="150"/>
        <end position="179"/>
    </location>
</feature>
<feature type="transmembrane region" description="Helical" evidence="2">
    <location>
        <begin position="205"/>
        <end position="231"/>
    </location>
</feature>
<feature type="binding site" description="axial binding residue" evidence="1">
    <location>
        <position position="133"/>
    </location>
    <ligand>
        <name>(7R,8Z)-bacteriochlorophyll b</name>
        <dbReference type="ChEBI" id="CHEBI:30034"/>
    </ligand>
    <ligandPart>
        <name>Mg</name>
        <dbReference type="ChEBI" id="CHEBI:25107"/>
    </ligandPart>
</feature>
<feature type="binding site" description="axial binding residue" evidence="1">
    <location>
        <position position="153"/>
    </location>
    <ligand>
        <name>(7R,8Z)-bacteriochlorophyll b</name>
        <dbReference type="ChEBI" id="CHEBI:30034"/>
    </ligand>
    <ligandPart>
        <name>Mg</name>
        <dbReference type="ChEBI" id="CHEBI:25107"/>
    </ligandPart>
</feature>
<feature type="binding site" evidence="1">
    <location>
        <position position="170"/>
    </location>
    <ligand>
        <name>Fe cation</name>
        <dbReference type="ChEBI" id="CHEBI:24875"/>
    </ligand>
</feature>
<feature type="binding site" evidence="1">
    <location>
        <position position="196"/>
    </location>
    <ligand>
        <name>a ubiquinone</name>
        <dbReference type="ChEBI" id="CHEBI:16389"/>
    </ligand>
</feature>
<feature type="binding site" evidence="1">
    <location>
        <position position="210"/>
    </location>
    <ligand>
        <name>Fe cation</name>
        <dbReference type="ChEBI" id="CHEBI:24875"/>
    </ligand>
</feature>
<feature type="non-terminal residue">
    <location>
        <position position="1"/>
    </location>
</feature>
<name>RCEL_PARPM</name>
<reference key="1">
    <citation type="journal article" date="1997" name="J. Mol. Evol.">
        <title>Horizontal transfer of genes coding for the photosynthetic reaction centers of purple bacteria.</title>
        <authorList>
            <person name="Nagashima K.V."/>
            <person name="Hiraishi A."/>
            <person name="Shimada K."/>
            <person name="Matsuura K."/>
        </authorList>
    </citation>
    <scope>NUCLEOTIDE SEQUENCE [GENOMIC DNA]</scope>
    <source>
        <strain>D / ATCC 17899 / DSM 180</strain>
    </source>
</reference>
<proteinExistence type="inferred from homology"/>
<comment type="function">
    <text>The reaction center is a membrane-bound complex that mediates the initial photochemical event in the electron transfer process of photosynthesis.</text>
</comment>
<comment type="subunit">
    <text>Reaction center is composed of four bacteriochlorophylls, two bacteriopheophytins, two ubiquinones, one iron, and three highly hydrophobic polypeptide chains (designated L, M, and H).</text>
</comment>
<comment type="subcellular location">
    <subcellularLocation>
        <location evidence="1">Cellular chromatophore membrane</location>
        <topology evidence="1">Multi-pass membrane protein</topology>
    </subcellularLocation>
</comment>
<comment type="similarity">
    <text evidence="3">Belongs to the reaction center PufL/M/PsbA/D family.</text>
</comment>
<keyword id="KW-0076">Bacteriochlorophyll</keyword>
<keyword id="KW-0148">Chlorophyll</keyword>
<keyword id="KW-0157">Chromophore</keyword>
<keyword id="KW-0249">Electron transport</keyword>
<keyword id="KW-0408">Iron</keyword>
<keyword id="KW-0460">Magnesium</keyword>
<keyword id="KW-0472">Membrane</keyword>
<keyword id="KW-0479">Metal-binding</keyword>
<keyword id="KW-0602">Photosynthesis</keyword>
<keyword id="KW-0674">Reaction center</keyword>
<keyword id="KW-0812">Transmembrane</keyword>
<keyword id="KW-1133">Transmembrane helix</keyword>
<keyword id="KW-0813">Transport</keyword>
<dbReference type="EMBL" id="D50681">
    <property type="protein sequence ID" value="BAA09329.1"/>
    <property type="molecule type" value="Genomic_DNA"/>
</dbReference>
<dbReference type="PIR" id="T10820">
    <property type="entry name" value="T10820"/>
</dbReference>
<dbReference type="GO" id="GO:0030077">
    <property type="term" value="C:plasma membrane light-harvesting complex"/>
    <property type="evidence" value="ECO:0007669"/>
    <property type="project" value="InterPro"/>
</dbReference>
<dbReference type="GO" id="GO:0042717">
    <property type="term" value="C:plasma membrane-derived chromatophore membrane"/>
    <property type="evidence" value="ECO:0007669"/>
    <property type="project" value="UniProtKB-SubCell"/>
</dbReference>
<dbReference type="GO" id="GO:0042314">
    <property type="term" value="F:bacteriochlorophyll binding"/>
    <property type="evidence" value="ECO:0007669"/>
    <property type="project" value="UniProtKB-KW"/>
</dbReference>
<dbReference type="GO" id="GO:0045156">
    <property type="term" value="F:electron transporter, transferring electrons within the cyclic electron transport pathway of photosynthesis activity"/>
    <property type="evidence" value="ECO:0007669"/>
    <property type="project" value="InterPro"/>
</dbReference>
<dbReference type="GO" id="GO:0046872">
    <property type="term" value="F:metal ion binding"/>
    <property type="evidence" value="ECO:0007669"/>
    <property type="project" value="UniProtKB-KW"/>
</dbReference>
<dbReference type="GO" id="GO:0009772">
    <property type="term" value="P:photosynthetic electron transport in photosystem II"/>
    <property type="evidence" value="ECO:0007669"/>
    <property type="project" value="InterPro"/>
</dbReference>
<dbReference type="Gene3D" id="1.20.85.10">
    <property type="entry name" value="Photosystem II protein D1-like"/>
    <property type="match status" value="2"/>
</dbReference>
<dbReference type="InterPro" id="IPR036854">
    <property type="entry name" value="Photo_II_D1/D2_sf"/>
</dbReference>
<dbReference type="InterPro" id="IPR005871">
    <property type="entry name" value="Photo_RC_L"/>
</dbReference>
<dbReference type="InterPro" id="IPR000484">
    <property type="entry name" value="Photo_RC_L/M"/>
</dbReference>
<dbReference type="InterPro" id="IPR055265">
    <property type="entry name" value="Photo_RC_L/M_CS"/>
</dbReference>
<dbReference type="NCBIfam" id="TIGR01157">
    <property type="entry name" value="pufL"/>
    <property type="match status" value="1"/>
</dbReference>
<dbReference type="Pfam" id="PF00124">
    <property type="entry name" value="Photo_RC"/>
    <property type="match status" value="1"/>
</dbReference>
<dbReference type="PRINTS" id="PR00256">
    <property type="entry name" value="REACTNCENTRE"/>
</dbReference>
<dbReference type="SUPFAM" id="SSF81483">
    <property type="entry name" value="Bacterial photosystem II reaction centre, L and M subunits"/>
    <property type="match status" value="1"/>
</dbReference>
<dbReference type="PROSITE" id="PS00244">
    <property type="entry name" value="REACTION_CENTER"/>
    <property type="match status" value="1"/>
</dbReference>
<accession>P51750</accession>
<protein>
    <recommendedName>
        <fullName>Reaction center protein L chain</fullName>
    </recommendedName>
    <alternativeName>
        <fullName>Photosynthetic reaction center L subunit</fullName>
    </alternativeName>
</protein>
<gene>
    <name type="primary">pufL</name>
</gene>
<organism>
    <name type="scientific">Pararhodospirillum photometricum</name>
    <name type="common">Rhodospirillum photometricum</name>
    <dbReference type="NCBI Taxonomy" id="1084"/>
    <lineage>
        <taxon>Bacteria</taxon>
        <taxon>Pseudomonadati</taxon>
        <taxon>Pseudomonadota</taxon>
        <taxon>Alphaproteobacteria</taxon>
        <taxon>Rhodospirillales</taxon>
        <taxon>Rhodospirillaceae</taxon>
        <taxon>Pararhodospirillum</taxon>
    </lineage>
</organism>